<protein>
    <recommendedName>
        <fullName>5-hydroxyisourate hydrolase</fullName>
        <shortName>HIU hydrolase</shortName>
        <shortName>HIUHase</shortName>
        <ecNumber>3.5.2.17</ecNumber>
    </recommendedName>
    <alternativeName>
        <fullName>Transthyretin-like protein</fullName>
        <shortName>TLP</shortName>
    </alternativeName>
</protein>
<feature type="signal peptide" evidence="1">
    <location>
        <begin position="1"/>
        <end position="23"/>
    </location>
</feature>
<feature type="chain" id="PRO_0000035773" description="5-hydroxyisourate hydrolase">
    <location>
        <begin position="24"/>
        <end position="137"/>
    </location>
</feature>
<feature type="binding site" evidence="1">
    <location>
        <position position="32"/>
    </location>
    <ligand>
        <name>substrate</name>
    </ligand>
</feature>
<feature type="binding site" evidence="1">
    <location>
        <position position="70"/>
    </location>
    <ligand>
        <name>substrate</name>
    </ligand>
</feature>
<feature type="binding site" evidence="1">
    <location>
        <position position="134"/>
    </location>
    <ligand>
        <name>substrate</name>
    </ligand>
</feature>
<comment type="function">
    <text evidence="1">Catalyzes the hydrolysis of 5-hydroxyisourate (HIU) to 2-oxo-4-hydroxy-4-carboxy-5-ureidoimidazoline (OHCU).</text>
</comment>
<comment type="catalytic activity">
    <reaction>
        <text>5-hydroxyisourate + H2O = 5-hydroxy-2-oxo-4-ureido-2,5-dihydro-1H-imidazole-5-carboxylate + H(+)</text>
        <dbReference type="Rhea" id="RHEA:23736"/>
        <dbReference type="ChEBI" id="CHEBI:15377"/>
        <dbReference type="ChEBI" id="CHEBI:15378"/>
        <dbReference type="ChEBI" id="CHEBI:18072"/>
        <dbReference type="ChEBI" id="CHEBI:58639"/>
        <dbReference type="EC" id="3.5.2.17"/>
    </reaction>
</comment>
<comment type="subunit">
    <text evidence="1">Homotetramer.</text>
</comment>
<comment type="subcellular location">
    <subcellularLocation>
        <location evidence="1">Periplasm</location>
    </subcellularLocation>
</comment>
<comment type="miscellaneous">
    <text>HIU hydrolysis also occurs spontaneously, but more slowly.</text>
</comment>
<comment type="similarity">
    <text evidence="2">Belongs to the transthyretin family. 5-hydroxyisourate hydrolase subfamily.</text>
</comment>
<name>HIUH_ECO57</name>
<evidence type="ECO:0000250" key="1"/>
<evidence type="ECO:0000305" key="2"/>
<proteinExistence type="inferred from homology"/>
<accession>Q8XB75</accession>
<gene>
    <name type="primary">hiuH</name>
    <name type="ordered locus">Z3062</name>
    <name type="ordered locus">ECs2708</name>
</gene>
<keyword id="KW-0378">Hydrolase</keyword>
<keyword id="KW-0574">Periplasm</keyword>
<keyword id="KW-0659">Purine metabolism</keyword>
<keyword id="KW-1185">Reference proteome</keyword>
<keyword id="KW-0732">Signal</keyword>
<reference key="1">
    <citation type="journal article" date="2001" name="Nature">
        <title>Genome sequence of enterohaemorrhagic Escherichia coli O157:H7.</title>
        <authorList>
            <person name="Perna N.T."/>
            <person name="Plunkett G. III"/>
            <person name="Burland V."/>
            <person name="Mau B."/>
            <person name="Glasner J.D."/>
            <person name="Rose D.J."/>
            <person name="Mayhew G.F."/>
            <person name="Evans P.S."/>
            <person name="Gregor J."/>
            <person name="Kirkpatrick H.A."/>
            <person name="Posfai G."/>
            <person name="Hackett J."/>
            <person name="Klink S."/>
            <person name="Boutin A."/>
            <person name="Shao Y."/>
            <person name="Miller L."/>
            <person name="Grotbeck E.J."/>
            <person name="Davis N.W."/>
            <person name="Lim A."/>
            <person name="Dimalanta E.T."/>
            <person name="Potamousis K."/>
            <person name="Apodaca J."/>
            <person name="Anantharaman T.S."/>
            <person name="Lin J."/>
            <person name="Yen G."/>
            <person name="Schwartz D.C."/>
            <person name="Welch R.A."/>
            <person name="Blattner F.R."/>
        </authorList>
    </citation>
    <scope>NUCLEOTIDE SEQUENCE [LARGE SCALE GENOMIC DNA]</scope>
    <source>
        <strain>O157:H7 / EDL933 / ATCC 700927 / EHEC</strain>
    </source>
</reference>
<reference key="2">
    <citation type="journal article" date="2001" name="DNA Res.">
        <title>Complete genome sequence of enterohemorrhagic Escherichia coli O157:H7 and genomic comparison with a laboratory strain K-12.</title>
        <authorList>
            <person name="Hayashi T."/>
            <person name="Makino K."/>
            <person name="Ohnishi M."/>
            <person name="Kurokawa K."/>
            <person name="Ishii K."/>
            <person name="Yokoyama K."/>
            <person name="Han C.-G."/>
            <person name="Ohtsubo E."/>
            <person name="Nakayama K."/>
            <person name="Murata T."/>
            <person name="Tanaka M."/>
            <person name="Tobe T."/>
            <person name="Iida T."/>
            <person name="Takami H."/>
            <person name="Honda T."/>
            <person name="Sasakawa C."/>
            <person name="Ogasawara N."/>
            <person name="Yasunaga T."/>
            <person name="Kuhara S."/>
            <person name="Shiba T."/>
            <person name="Hattori M."/>
            <person name="Shinagawa H."/>
        </authorList>
    </citation>
    <scope>NUCLEOTIDE SEQUENCE [LARGE SCALE GENOMIC DNA]</scope>
    <source>
        <strain>O157:H7 / Sakai / RIMD 0509952 / EHEC</strain>
    </source>
</reference>
<organism>
    <name type="scientific">Escherichia coli O157:H7</name>
    <dbReference type="NCBI Taxonomy" id="83334"/>
    <lineage>
        <taxon>Bacteria</taxon>
        <taxon>Pseudomonadati</taxon>
        <taxon>Pseudomonadota</taxon>
        <taxon>Gammaproteobacteria</taxon>
        <taxon>Enterobacterales</taxon>
        <taxon>Enterobacteriaceae</taxon>
        <taxon>Escherichia</taxon>
    </lineage>
</organism>
<sequence>MLKRYLVLSVVTAAFSLPSLVYAAQQNILSVHILNQQTGKPAADVTVTLEKKADNGWLQLNTAKTDKDGRIKALWPEQTATTGDYRVVFKTGDYFKKQNLESFFPEIPVEFHINKVNEHYHVPLLLSQYGYSTYRGS</sequence>
<dbReference type="EC" id="3.5.2.17"/>
<dbReference type="EMBL" id="AE005174">
    <property type="protein sequence ID" value="AAG56983.1"/>
    <property type="molecule type" value="Genomic_DNA"/>
</dbReference>
<dbReference type="EMBL" id="BA000007">
    <property type="protein sequence ID" value="BAB36131.1"/>
    <property type="molecule type" value="Genomic_DNA"/>
</dbReference>
<dbReference type="PIR" id="C85815">
    <property type="entry name" value="C85815"/>
</dbReference>
<dbReference type="PIR" id="D90967">
    <property type="entry name" value="D90967"/>
</dbReference>
<dbReference type="RefSeq" id="NP_310735.1">
    <property type="nucleotide sequence ID" value="NC_002695.1"/>
</dbReference>
<dbReference type="RefSeq" id="WP_000920132.1">
    <property type="nucleotide sequence ID" value="NZ_VOAI01000028.1"/>
</dbReference>
<dbReference type="SMR" id="Q8XB75"/>
<dbReference type="STRING" id="155864.Z3062"/>
<dbReference type="GeneID" id="912669"/>
<dbReference type="GeneID" id="93775216"/>
<dbReference type="KEGG" id="ece:Z3062"/>
<dbReference type="KEGG" id="ecs:ECs_2708"/>
<dbReference type="PATRIC" id="fig|386585.9.peg.2836"/>
<dbReference type="eggNOG" id="COG2351">
    <property type="taxonomic scope" value="Bacteria"/>
</dbReference>
<dbReference type="HOGENOM" id="CLU_115536_3_0_6"/>
<dbReference type="OMA" id="CSENQNY"/>
<dbReference type="Proteomes" id="UP000000558">
    <property type="component" value="Chromosome"/>
</dbReference>
<dbReference type="Proteomes" id="UP000002519">
    <property type="component" value="Chromosome"/>
</dbReference>
<dbReference type="GO" id="GO:0042597">
    <property type="term" value="C:periplasmic space"/>
    <property type="evidence" value="ECO:0007669"/>
    <property type="project" value="UniProtKB-SubCell"/>
</dbReference>
<dbReference type="GO" id="GO:0033971">
    <property type="term" value="F:hydroxyisourate hydrolase activity"/>
    <property type="evidence" value="ECO:0007669"/>
    <property type="project" value="UniProtKB-EC"/>
</dbReference>
<dbReference type="GO" id="GO:0006144">
    <property type="term" value="P:purine nucleobase metabolic process"/>
    <property type="evidence" value="ECO:0007669"/>
    <property type="project" value="UniProtKB-KW"/>
</dbReference>
<dbReference type="CDD" id="cd05822">
    <property type="entry name" value="TLP_HIUase"/>
    <property type="match status" value="1"/>
</dbReference>
<dbReference type="FunFam" id="2.60.40.180:FF:000001">
    <property type="entry name" value="5-hydroxyisourate hydrolase"/>
    <property type="match status" value="1"/>
</dbReference>
<dbReference type="Gene3D" id="2.60.40.180">
    <property type="entry name" value="Transthyretin/hydroxyisourate hydrolase domain"/>
    <property type="match status" value="1"/>
</dbReference>
<dbReference type="InterPro" id="IPR014306">
    <property type="entry name" value="Hydroxyisourate_hydrolase"/>
</dbReference>
<dbReference type="InterPro" id="IPR023418">
    <property type="entry name" value="Thyroxine_BS"/>
</dbReference>
<dbReference type="InterPro" id="IPR000895">
    <property type="entry name" value="Transthyretin/HIU_hydrolase"/>
</dbReference>
<dbReference type="InterPro" id="IPR023416">
    <property type="entry name" value="Transthyretin/HIU_hydrolase_d"/>
</dbReference>
<dbReference type="InterPro" id="IPR036817">
    <property type="entry name" value="Transthyretin/HIU_hydrolase_sf"/>
</dbReference>
<dbReference type="InterPro" id="IPR023419">
    <property type="entry name" value="Transthyretin_CS"/>
</dbReference>
<dbReference type="NCBIfam" id="TIGR02962">
    <property type="entry name" value="hdxy_isourate"/>
    <property type="match status" value="1"/>
</dbReference>
<dbReference type="NCBIfam" id="NF011610">
    <property type="entry name" value="PRK15036.1"/>
    <property type="match status" value="1"/>
</dbReference>
<dbReference type="PANTHER" id="PTHR10395:SF7">
    <property type="entry name" value="5-HYDROXYISOURATE HYDROLASE"/>
    <property type="match status" value="1"/>
</dbReference>
<dbReference type="PANTHER" id="PTHR10395">
    <property type="entry name" value="URICASE AND TRANSTHYRETIN-RELATED"/>
    <property type="match status" value="1"/>
</dbReference>
<dbReference type="Pfam" id="PF00576">
    <property type="entry name" value="Transthyretin"/>
    <property type="match status" value="1"/>
</dbReference>
<dbReference type="PRINTS" id="PR00189">
    <property type="entry name" value="TRNSTHYRETIN"/>
</dbReference>
<dbReference type="SMART" id="SM00095">
    <property type="entry name" value="TR_THY"/>
    <property type="match status" value="1"/>
</dbReference>
<dbReference type="SUPFAM" id="SSF49472">
    <property type="entry name" value="Transthyretin (synonym: prealbumin)"/>
    <property type="match status" value="1"/>
</dbReference>
<dbReference type="PROSITE" id="PS00768">
    <property type="entry name" value="TRANSTHYRETIN_1"/>
    <property type="match status" value="1"/>
</dbReference>
<dbReference type="PROSITE" id="PS00769">
    <property type="entry name" value="TRANSTHYRETIN_2"/>
    <property type="match status" value="1"/>
</dbReference>